<accession>B5E7G3</accession>
<dbReference type="EC" id="6.3.4.-" evidence="1"/>
<dbReference type="EMBL" id="CP001015">
    <property type="protein sequence ID" value="ACF55700.1"/>
    <property type="molecule type" value="Genomic_DNA"/>
</dbReference>
<dbReference type="SMR" id="B5E7G3"/>
<dbReference type="KEGG" id="spx:SPG_1647"/>
<dbReference type="HOGENOM" id="CLU_038915_0_2_9"/>
<dbReference type="GO" id="GO:0005737">
    <property type="term" value="C:cytoplasm"/>
    <property type="evidence" value="ECO:0007669"/>
    <property type="project" value="UniProtKB-SubCell"/>
</dbReference>
<dbReference type="GO" id="GO:0005524">
    <property type="term" value="F:ATP binding"/>
    <property type="evidence" value="ECO:0007669"/>
    <property type="project" value="UniProtKB-KW"/>
</dbReference>
<dbReference type="GO" id="GO:0016879">
    <property type="term" value="F:ligase activity, forming carbon-nitrogen bonds"/>
    <property type="evidence" value="ECO:0007669"/>
    <property type="project" value="UniProtKB-UniRule"/>
</dbReference>
<dbReference type="GO" id="GO:0000049">
    <property type="term" value="F:tRNA binding"/>
    <property type="evidence" value="ECO:0007669"/>
    <property type="project" value="UniProtKB-KW"/>
</dbReference>
<dbReference type="GO" id="GO:0006400">
    <property type="term" value="P:tRNA modification"/>
    <property type="evidence" value="ECO:0007669"/>
    <property type="project" value="UniProtKB-UniRule"/>
</dbReference>
<dbReference type="Gene3D" id="3.40.50.620">
    <property type="entry name" value="HUPs"/>
    <property type="match status" value="1"/>
</dbReference>
<dbReference type="HAMAP" id="MF_01539">
    <property type="entry name" value="TmcAL"/>
    <property type="match status" value="1"/>
</dbReference>
<dbReference type="InterPro" id="IPR014729">
    <property type="entry name" value="Rossmann-like_a/b/a_fold"/>
</dbReference>
<dbReference type="InterPro" id="IPR008513">
    <property type="entry name" value="tRNA(Met)_cyd_acetate_ligase"/>
</dbReference>
<dbReference type="NCBIfam" id="NF010191">
    <property type="entry name" value="PRK13670.1"/>
    <property type="match status" value="1"/>
</dbReference>
<dbReference type="PANTHER" id="PTHR37825">
    <property type="entry name" value="TRNA(MET) CYTIDINE ACETATE LIGASE"/>
    <property type="match status" value="1"/>
</dbReference>
<dbReference type="PANTHER" id="PTHR37825:SF1">
    <property type="entry name" value="TRNA(MET) CYTIDINE ACETATE LIGASE"/>
    <property type="match status" value="1"/>
</dbReference>
<dbReference type="Pfam" id="PF05636">
    <property type="entry name" value="HIGH_NTase1"/>
    <property type="match status" value="1"/>
</dbReference>
<dbReference type="SUPFAM" id="SSF52374">
    <property type="entry name" value="Nucleotidylyl transferase"/>
    <property type="match status" value="1"/>
</dbReference>
<organism>
    <name type="scientific">Streptococcus pneumoniae serotype 19F (strain G54)</name>
    <dbReference type="NCBI Taxonomy" id="512566"/>
    <lineage>
        <taxon>Bacteria</taxon>
        <taxon>Bacillati</taxon>
        <taxon>Bacillota</taxon>
        <taxon>Bacilli</taxon>
        <taxon>Lactobacillales</taxon>
        <taxon>Streptococcaceae</taxon>
        <taxon>Streptococcus</taxon>
    </lineage>
</organism>
<comment type="function">
    <text evidence="1">Catalyzes the formation of N(4)-acetylcytidine (ac(4)C) at the wobble position of elongator tRNA(Met), using acetate and ATP as substrates. First activates an acetate ion to form acetyladenylate (Ac-AMP) and then transfers the acetyl group to tRNA to form ac(4)C34.</text>
</comment>
<comment type="catalytic activity">
    <reaction evidence="1">
        <text>cytidine(34) in elongator tRNA(Met) + acetate + ATP = N(4)-acetylcytidine(34) in elongator tRNA(Met) + AMP + diphosphate</text>
        <dbReference type="Rhea" id="RHEA:58144"/>
        <dbReference type="Rhea" id="RHEA-COMP:10693"/>
        <dbReference type="Rhea" id="RHEA-COMP:10694"/>
        <dbReference type="ChEBI" id="CHEBI:30089"/>
        <dbReference type="ChEBI" id="CHEBI:30616"/>
        <dbReference type="ChEBI" id="CHEBI:33019"/>
        <dbReference type="ChEBI" id="CHEBI:74900"/>
        <dbReference type="ChEBI" id="CHEBI:82748"/>
        <dbReference type="ChEBI" id="CHEBI:456215"/>
    </reaction>
</comment>
<comment type="subcellular location">
    <subcellularLocation>
        <location evidence="1">Cytoplasm</location>
    </subcellularLocation>
</comment>
<comment type="similarity">
    <text evidence="1">Belongs to the TmcAL family.</text>
</comment>
<proteinExistence type="inferred from homology"/>
<reference key="1">
    <citation type="journal article" date="2001" name="Microb. Drug Resist.">
        <title>Annotated draft genomic sequence from a Streptococcus pneumoniae type 19F clinical isolate.</title>
        <authorList>
            <person name="Dopazo J."/>
            <person name="Mendoza A."/>
            <person name="Herrero J."/>
            <person name="Caldara F."/>
            <person name="Humbert Y."/>
            <person name="Friedli L."/>
            <person name="Guerrier M."/>
            <person name="Grand-Schenk E."/>
            <person name="Gandin C."/>
            <person name="de Francesco M."/>
            <person name="Polissi A."/>
            <person name="Buell G."/>
            <person name="Feger G."/>
            <person name="Garcia E."/>
            <person name="Peitsch M."/>
            <person name="Garcia-Bustos J.F."/>
        </authorList>
    </citation>
    <scope>NUCLEOTIDE SEQUENCE [LARGE SCALE GENOMIC DNA]</scope>
    <source>
        <strain>G54</strain>
    </source>
</reference>
<reference key="2">
    <citation type="submission" date="2008-03" db="EMBL/GenBank/DDBJ databases">
        <title>Pneumococcal beta glucoside metabolism investigated by whole genome comparison.</title>
        <authorList>
            <person name="Mulas L."/>
            <person name="Trappetti C."/>
            <person name="Hakenbeck R."/>
            <person name="Iannelli F."/>
            <person name="Pozzi G."/>
            <person name="Davidsen T.M."/>
            <person name="Tettelin H."/>
            <person name="Oggioni M."/>
        </authorList>
    </citation>
    <scope>NUCLEOTIDE SEQUENCE [LARGE SCALE GENOMIC DNA]</scope>
    <source>
        <strain>G54</strain>
    </source>
</reference>
<evidence type="ECO:0000255" key="1">
    <source>
        <dbReference type="HAMAP-Rule" id="MF_01539"/>
    </source>
</evidence>
<feature type="chain" id="PRO_1000198861" description="tRNA(Met) cytidine acetate ligase">
    <location>
        <begin position="1"/>
        <end position="365"/>
    </location>
</feature>
<feature type="binding site" evidence="1">
    <location>
        <begin position="7"/>
        <end position="20"/>
    </location>
    <ligand>
        <name>ATP</name>
        <dbReference type="ChEBI" id="CHEBI:30616"/>
    </ligand>
</feature>
<feature type="binding site" evidence="1">
    <location>
        <position position="96"/>
    </location>
    <ligand>
        <name>ATP</name>
        <dbReference type="ChEBI" id="CHEBI:30616"/>
    </ligand>
</feature>
<feature type="binding site" evidence="1">
    <location>
        <position position="152"/>
    </location>
    <ligand>
        <name>ATP</name>
        <dbReference type="ChEBI" id="CHEBI:30616"/>
    </ligand>
</feature>
<feature type="binding site" evidence="1">
    <location>
        <position position="175"/>
    </location>
    <ligand>
        <name>ATP</name>
        <dbReference type="ChEBI" id="CHEBI:30616"/>
    </ligand>
</feature>
<protein>
    <recommendedName>
        <fullName evidence="1">tRNA(Met) cytidine acetate ligase</fullName>
        <ecNumber evidence="1">6.3.4.-</ecNumber>
    </recommendedName>
</protein>
<sequence length="365" mass="41296">MTITGIIAEFNPFHNGHKYLLDQAEGLKIVAMSGNFMQRGEPAIVDKWTRAQMALENGADLVVELPFLVSVQAADFFGQGAVDILDRLGIDSLVFGTEEVRDYQKIADLYTEKGAEMEKFVENLPDSLSYPQKTQAMWKEFAGLDFSGNTPNHVLALAYAKAVAGRNIKLHPIQRQGAGYHSVNKDVDFASATALRQHQKDQDFLERFMPSVALFEQASKVIWEDYFPLLRYQILSNPDLTTIYQVNQEMAVRIKEAIKTAQSVEELVELVTTKRYTKARVRRLLTYILVQARESDLPEGIHVLGFTEKGRQHLKYLKGQVSLVSRIGKEPWDVMTQKADQIYQLGNPSIAEQNFGRVPIRIETN</sequence>
<name>TMCAL_STRP4</name>
<keyword id="KW-0067">ATP-binding</keyword>
<keyword id="KW-0963">Cytoplasm</keyword>
<keyword id="KW-0436">Ligase</keyword>
<keyword id="KW-0547">Nucleotide-binding</keyword>
<keyword id="KW-0694">RNA-binding</keyword>
<keyword id="KW-0819">tRNA processing</keyword>
<keyword id="KW-0820">tRNA-binding</keyword>
<gene>
    <name evidence="1" type="primary">tmcAL</name>
    <name type="ordered locus">SPG_1647</name>
</gene>